<reference key="1">
    <citation type="journal article" date="2006" name="Nat. Biotechnol.">
        <title>Complete genome sequence of the entomopathogenic and metabolically versatile soil bacterium Pseudomonas entomophila.</title>
        <authorList>
            <person name="Vodovar N."/>
            <person name="Vallenet D."/>
            <person name="Cruveiller S."/>
            <person name="Rouy Z."/>
            <person name="Barbe V."/>
            <person name="Acosta C."/>
            <person name="Cattolico L."/>
            <person name="Jubin C."/>
            <person name="Lajus A."/>
            <person name="Segurens B."/>
            <person name="Vacherie B."/>
            <person name="Wincker P."/>
            <person name="Weissenbach J."/>
            <person name="Lemaitre B."/>
            <person name="Medigue C."/>
            <person name="Boccard F."/>
        </authorList>
    </citation>
    <scope>NUCLEOTIDE SEQUENCE [LARGE SCALE GENOMIC DNA]</scope>
    <source>
        <strain>L48</strain>
    </source>
</reference>
<gene>
    <name evidence="1" type="primary">murI</name>
    <name type="ordered locus">PSEEN0879</name>
</gene>
<proteinExistence type="inferred from homology"/>
<accession>Q1IEW8</accession>
<keyword id="KW-0133">Cell shape</keyword>
<keyword id="KW-0961">Cell wall biogenesis/degradation</keyword>
<keyword id="KW-0413">Isomerase</keyword>
<keyword id="KW-0573">Peptidoglycan synthesis</keyword>
<evidence type="ECO:0000255" key="1">
    <source>
        <dbReference type="HAMAP-Rule" id="MF_00258"/>
    </source>
</evidence>
<sequence>MNERSAPIGVMDSGVGGLSVLAEIQRLLPNETLLYVADSGHVPYGEKSPDYIRQRLRHIAGFLREQGAKAMVLACNTATVATVADLRALYPDWPLVGMEPAVKPAAAATRSGVVGVLATTGTLQSAKFAALLDRFASDVRVITQPCPGLVECIEAGDLTSPALRQLLAGYVQPLLAQGCDTLILGCTHYPFLRPMLADMVPADVAIIDTGAAVARQLQRLLGERDLLADGPARETAFWTSADPDSLKKILPMLWMQSDRVQSFPL</sequence>
<comment type="function">
    <text evidence="1">Provides the (R)-glutamate required for cell wall biosynthesis.</text>
</comment>
<comment type="catalytic activity">
    <reaction evidence="1">
        <text>L-glutamate = D-glutamate</text>
        <dbReference type="Rhea" id="RHEA:12813"/>
        <dbReference type="ChEBI" id="CHEBI:29985"/>
        <dbReference type="ChEBI" id="CHEBI:29986"/>
        <dbReference type="EC" id="5.1.1.3"/>
    </reaction>
</comment>
<comment type="pathway">
    <text evidence="1">Cell wall biogenesis; peptidoglycan biosynthesis.</text>
</comment>
<comment type="similarity">
    <text evidence="1">Belongs to the aspartate/glutamate racemases family.</text>
</comment>
<dbReference type="EC" id="5.1.1.3" evidence="1"/>
<dbReference type="EMBL" id="CT573326">
    <property type="protein sequence ID" value="CAK13787.1"/>
    <property type="molecule type" value="Genomic_DNA"/>
</dbReference>
<dbReference type="RefSeq" id="WP_011532214.1">
    <property type="nucleotide sequence ID" value="NC_008027.1"/>
</dbReference>
<dbReference type="SMR" id="Q1IEW8"/>
<dbReference type="STRING" id="384676.PSEEN0879"/>
<dbReference type="GeneID" id="32804180"/>
<dbReference type="KEGG" id="pen:PSEEN0879"/>
<dbReference type="eggNOG" id="COG0796">
    <property type="taxonomic scope" value="Bacteria"/>
</dbReference>
<dbReference type="HOGENOM" id="CLU_052344_1_0_6"/>
<dbReference type="OrthoDB" id="9801055at2"/>
<dbReference type="UniPathway" id="UPA00219"/>
<dbReference type="Proteomes" id="UP000000658">
    <property type="component" value="Chromosome"/>
</dbReference>
<dbReference type="GO" id="GO:0008881">
    <property type="term" value="F:glutamate racemase activity"/>
    <property type="evidence" value="ECO:0007669"/>
    <property type="project" value="UniProtKB-UniRule"/>
</dbReference>
<dbReference type="GO" id="GO:0071555">
    <property type="term" value="P:cell wall organization"/>
    <property type="evidence" value="ECO:0007669"/>
    <property type="project" value="UniProtKB-KW"/>
</dbReference>
<dbReference type="GO" id="GO:0009252">
    <property type="term" value="P:peptidoglycan biosynthetic process"/>
    <property type="evidence" value="ECO:0007669"/>
    <property type="project" value="UniProtKB-UniRule"/>
</dbReference>
<dbReference type="GO" id="GO:0008360">
    <property type="term" value="P:regulation of cell shape"/>
    <property type="evidence" value="ECO:0007669"/>
    <property type="project" value="UniProtKB-KW"/>
</dbReference>
<dbReference type="FunFam" id="3.40.50.1860:FF:000001">
    <property type="entry name" value="Glutamate racemase"/>
    <property type="match status" value="1"/>
</dbReference>
<dbReference type="Gene3D" id="3.40.50.1860">
    <property type="match status" value="2"/>
</dbReference>
<dbReference type="HAMAP" id="MF_00258">
    <property type="entry name" value="Glu_racemase"/>
    <property type="match status" value="1"/>
</dbReference>
<dbReference type="InterPro" id="IPR015942">
    <property type="entry name" value="Asp/Glu/hydantoin_racemase"/>
</dbReference>
<dbReference type="InterPro" id="IPR001920">
    <property type="entry name" value="Asp/Glu_race"/>
</dbReference>
<dbReference type="InterPro" id="IPR018187">
    <property type="entry name" value="Asp/Glu_racemase_AS_1"/>
</dbReference>
<dbReference type="InterPro" id="IPR033134">
    <property type="entry name" value="Asp/Glu_racemase_AS_2"/>
</dbReference>
<dbReference type="InterPro" id="IPR004391">
    <property type="entry name" value="Glu_race"/>
</dbReference>
<dbReference type="NCBIfam" id="TIGR00067">
    <property type="entry name" value="glut_race"/>
    <property type="match status" value="1"/>
</dbReference>
<dbReference type="PANTHER" id="PTHR21198">
    <property type="entry name" value="GLUTAMATE RACEMASE"/>
    <property type="match status" value="1"/>
</dbReference>
<dbReference type="PANTHER" id="PTHR21198:SF2">
    <property type="entry name" value="GLUTAMATE RACEMASE"/>
    <property type="match status" value="1"/>
</dbReference>
<dbReference type="Pfam" id="PF01177">
    <property type="entry name" value="Asp_Glu_race"/>
    <property type="match status" value="1"/>
</dbReference>
<dbReference type="SUPFAM" id="SSF53681">
    <property type="entry name" value="Aspartate/glutamate racemase"/>
    <property type="match status" value="2"/>
</dbReference>
<dbReference type="PROSITE" id="PS00923">
    <property type="entry name" value="ASP_GLU_RACEMASE_1"/>
    <property type="match status" value="1"/>
</dbReference>
<dbReference type="PROSITE" id="PS00924">
    <property type="entry name" value="ASP_GLU_RACEMASE_2"/>
    <property type="match status" value="1"/>
</dbReference>
<name>MURI_PSEE4</name>
<feature type="chain" id="PRO_1000047598" description="Glutamate racemase">
    <location>
        <begin position="1"/>
        <end position="265"/>
    </location>
</feature>
<feature type="active site" description="Proton donor/acceptor" evidence="1">
    <location>
        <position position="75"/>
    </location>
</feature>
<feature type="active site" description="Proton donor/acceptor" evidence="1">
    <location>
        <position position="186"/>
    </location>
</feature>
<feature type="binding site" evidence="1">
    <location>
        <begin position="12"/>
        <end position="13"/>
    </location>
    <ligand>
        <name>substrate</name>
    </ligand>
</feature>
<feature type="binding site" evidence="1">
    <location>
        <begin position="44"/>
        <end position="45"/>
    </location>
    <ligand>
        <name>substrate</name>
    </ligand>
</feature>
<feature type="binding site" evidence="1">
    <location>
        <begin position="76"/>
        <end position="77"/>
    </location>
    <ligand>
        <name>substrate</name>
    </ligand>
</feature>
<feature type="binding site" evidence="1">
    <location>
        <begin position="187"/>
        <end position="188"/>
    </location>
    <ligand>
        <name>substrate</name>
    </ligand>
</feature>
<organism>
    <name type="scientific">Pseudomonas entomophila (strain L48)</name>
    <dbReference type="NCBI Taxonomy" id="384676"/>
    <lineage>
        <taxon>Bacteria</taxon>
        <taxon>Pseudomonadati</taxon>
        <taxon>Pseudomonadota</taxon>
        <taxon>Gammaproteobacteria</taxon>
        <taxon>Pseudomonadales</taxon>
        <taxon>Pseudomonadaceae</taxon>
        <taxon>Pseudomonas</taxon>
    </lineage>
</organism>
<protein>
    <recommendedName>
        <fullName evidence="1">Glutamate racemase</fullName>
        <ecNumber evidence="1">5.1.1.3</ecNumber>
    </recommendedName>
</protein>